<dbReference type="EC" id="2.7.1.48" evidence="1"/>
<dbReference type="EMBL" id="CP001186">
    <property type="protein sequence ID" value="ACK98093.1"/>
    <property type="molecule type" value="Genomic_DNA"/>
</dbReference>
<dbReference type="RefSeq" id="WP_000537080.1">
    <property type="nucleotide sequence ID" value="NC_011772.1"/>
</dbReference>
<dbReference type="SMR" id="B7IYN4"/>
<dbReference type="GeneID" id="72451060"/>
<dbReference type="KEGG" id="bcg:BCG9842_B0736"/>
<dbReference type="HOGENOM" id="CLU_021278_1_2_9"/>
<dbReference type="UniPathway" id="UPA00574">
    <property type="reaction ID" value="UER00637"/>
</dbReference>
<dbReference type="UniPathway" id="UPA00579">
    <property type="reaction ID" value="UER00640"/>
</dbReference>
<dbReference type="Proteomes" id="UP000006744">
    <property type="component" value="Chromosome"/>
</dbReference>
<dbReference type="GO" id="GO:0005737">
    <property type="term" value="C:cytoplasm"/>
    <property type="evidence" value="ECO:0007669"/>
    <property type="project" value="UniProtKB-SubCell"/>
</dbReference>
<dbReference type="GO" id="GO:0005524">
    <property type="term" value="F:ATP binding"/>
    <property type="evidence" value="ECO:0007669"/>
    <property type="project" value="UniProtKB-UniRule"/>
</dbReference>
<dbReference type="GO" id="GO:0043771">
    <property type="term" value="F:cytidine kinase activity"/>
    <property type="evidence" value="ECO:0007669"/>
    <property type="project" value="RHEA"/>
</dbReference>
<dbReference type="GO" id="GO:0004849">
    <property type="term" value="F:uridine kinase activity"/>
    <property type="evidence" value="ECO:0007669"/>
    <property type="project" value="UniProtKB-UniRule"/>
</dbReference>
<dbReference type="GO" id="GO:0044211">
    <property type="term" value="P:CTP salvage"/>
    <property type="evidence" value="ECO:0007669"/>
    <property type="project" value="UniProtKB-UniRule"/>
</dbReference>
<dbReference type="GO" id="GO:0044206">
    <property type="term" value="P:UMP salvage"/>
    <property type="evidence" value="ECO:0007669"/>
    <property type="project" value="UniProtKB-UniRule"/>
</dbReference>
<dbReference type="CDD" id="cd02023">
    <property type="entry name" value="UMPK"/>
    <property type="match status" value="1"/>
</dbReference>
<dbReference type="Gene3D" id="3.40.50.300">
    <property type="entry name" value="P-loop containing nucleotide triphosphate hydrolases"/>
    <property type="match status" value="1"/>
</dbReference>
<dbReference type="HAMAP" id="MF_00551">
    <property type="entry name" value="Uridine_kinase"/>
    <property type="match status" value="1"/>
</dbReference>
<dbReference type="InterPro" id="IPR027417">
    <property type="entry name" value="P-loop_NTPase"/>
</dbReference>
<dbReference type="InterPro" id="IPR006083">
    <property type="entry name" value="PRK/URK"/>
</dbReference>
<dbReference type="InterPro" id="IPR026008">
    <property type="entry name" value="Uridine_kinase"/>
</dbReference>
<dbReference type="InterPro" id="IPR000764">
    <property type="entry name" value="Uridine_kinase-like"/>
</dbReference>
<dbReference type="NCBIfam" id="NF004018">
    <property type="entry name" value="PRK05480.1"/>
    <property type="match status" value="1"/>
</dbReference>
<dbReference type="NCBIfam" id="TIGR00235">
    <property type="entry name" value="udk"/>
    <property type="match status" value="1"/>
</dbReference>
<dbReference type="PANTHER" id="PTHR10285">
    <property type="entry name" value="URIDINE KINASE"/>
    <property type="match status" value="1"/>
</dbReference>
<dbReference type="Pfam" id="PF00485">
    <property type="entry name" value="PRK"/>
    <property type="match status" value="1"/>
</dbReference>
<dbReference type="PRINTS" id="PR00988">
    <property type="entry name" value="URIDINKINASE"/>
</dbReference>
<dbReference type="SUPFAM" id="SSF52540">
    <property type="entry name" value="P-loop containing nucleoside triphosphate hydrolases"/>
    <property type="match status" value="1"/>
</dbReference>
<feature type="chain" id="PRO_1000129065" description="Uridine kinase">
    <location>
        <begin position="1"/>
        <end position="212"/>
    </location>
</feature>
<feature type="binding site" evidence="1">
    <location>
        <begin position="13"/>
        <end position="20"/>
    </location>
    <ligand>
        <name>ATP</name>
        <dbReference type="ChEBI" id="CHEBI:30616"/>
    </ligand>
</feature>
<proteinExistence type="inferred from homology"/>
<organism>
    <name type="scientific">Bacillus cereus (strain G9842)</name>
    <dbReference type="NCBI Taxonomy" id="405531"/>
    <lineage>
        <taxon>Bacteria</taxon>
        <taxon>Bacillati</taxon>
        <taxon>Bacillota</taxon>
        <taxon>Bacilli</taxon>
        <taxon>Bacillales</taxon>
        <taxon>Bacillaceae</taxon>
        <taxon>Bacillus</taxon>
        <taxon>Bacillus cereus group</taxon>
    </lineage>
</organism>
<gene>
    <name evidence="1" type="primary">udk</name>
    <name type="ordered locus">BCG9842_B0736</name>
</gene>
<evidence type="ECO:0000255" key="1">
    <source>
        <dbReference type="HAMAP-Rule" id="MF_00551"/>
    </source>
</evidence>
<accession>B7IYN4</accession>
<comment type="catalytic activity">
    <reaction evidence="1">
        <text>uridine + ATP = UMP + ADP + H(+)</text>
        <dbReference type="Rhea" id="RHEA:16825"/>
        <dbReference type="ChEBI" id="CHEBI:15378"/>
        <dbReference type="ChEBI" id="CHEBI:16704"/>
        <dbReference type="ChEBI" id="CHEBI:30616"/>
        <dbReference type="ChEBI" id="CHEBI:57865"/>
        <dbReference type="ChEBI" id="CHEBI:456216"/>
        <dbReference type="EC" id="2.7.1.48"/>
    </reaction>
</comment>
<comment type="catalytic activity">
    <reaction evidence="1">
        <text>cytidine + ATP = CMP + ADP + H(+)</text>
        <dbReference type="Rhea" id="RHEA:24674"/>
        <dbReference type="ChEBI" id="CHEBI:15378"/>
        <dbReference type="ChEBI" id="CHEBI:17562"/>
        <dbReference type="ChEBI" id="CHEBI:30616"/>
        <dbReference type="ChEBI" id="CHEBI:60377"/>
        <dbReference type="ChEBI" id="CHEBI:456216"/>
        <dbReference type="EC" id="2.7.1.48"/>
    </reaction>
</comment>
<comment type="pathway">
    <text evidence="1">Pyrimidine metabolism; CTP biosynthesis via salvage pathway; CTP from cytidine: step 1/3.</text>
</comment>
<comment type="pathway">
    <text evidence="1">Pyrimidine metabolism; UMP biosynthesis via salvage pathway; UMP from uridine: step 1/1.</text>
</comment>
<comment type="subcellular location">
    <subcellularLocation>
        <location evidence="1">Cytoplasm</location>
    </subcellularLocation>
</comment>
<comment type="similarity">
    <text evidence="1">Belongs to the uridine kinase family.</text>
</comment>
<name>URK_BACC2</name>
<keyword id="KW-0067">ATP-binding</keyword>
<keyword id="KW-0963">Cytoplasm</keyword>
<keyword id="KW-0418">Kinase</keyword>
<keyword id="KW-0547">Nucleotide-binding</keyword>
<keyword id="KW-0808">Transferase</keyword>
<protein>
    <recommendedName>
        <fullName evidence="1">Uridine kinase</fullName>
        <ecNumber evidence="1">2.7.1.48</ecNumber>
    </recommendedName>
    <alternativeName>
        <fullName evidence="1">Cytidine monophosphokinase</fullName>
    </alternativeName>
    <alternativeName>
        <fullName evidence="1">Uridine monophosphokinase</fullName>
    </alternativeName>
</protein>
<sequence>MGTNKPVVIGIAGGSGSGKTSVTKAIFDHFKGHSILILEQDYYYKDQSHLPMEERLKTNYDHPLAFDNDLLIEHLQQLLAYEQIDKPVYDYTLHTRSEEIIPVEPKDVIILEGILILEDPRLCELMDIKLFVDTDADLRILRRMQRDIKERGRTMDSVIDQYVTVVRPMHNQFIEPSKKFADIIIPEGGQNHVAIDIMVTKIATILEQKVNL</sequence>
<reference key="1">
    <citation type="submission" date="2008-10" db="EMBL/GenBank/DDBJ databases">
        <title>Genome sequence of Bacillus cereus G9842.</title>
        <authorList>
            <person name="Dodson R.J."/>
            <person name="Durkin A.S."/>
            <person name="Rosovitz M.J."/>
            <person name="Rasko D.A."/>
            <person name="Hoffmaster A."/>
            <person name="Ravel J."/>
            <person name="Sutton G."/>
        </authorList>
    </citation>
    <scope>NUCLEOTIDE SEQUENCE [LARGE SCALE GENOMIC DNA]</scope>
    <source>
        <strain>G9842</strain>
    </source>
</reference>